<comment type="function">
    <text evidence="2">Transaldolase is important for the balance of metabolites in the pentose-phosphate pathway.</text>
</comment>
<comment type="catalytic activity">
    <reaction evidence="2">
        <text>D-sedoheptulose 7-phosphate + D-glyceraldehyde 3-phosphate = D-erythrose 4-phosphate + beta-D-fructose 6-phosphate</text>
        <dbReference type="Rhea" id="RHEA:17053"/>
        <dbReference type="ChEBI" id="CHEBI:16897"/>
        <dbReference type="ChEBI" id="CHEBI:57483"/>
        <dbReference type="ChEBI" id="CHEBI:57634"/>
        <dbReference type="ChEBI" id="CHEBI:59776"/>
        <dbReference type="EC" id="2.2.1.2"/>
    </reaction>
</comment>
<comment type="pathway">
    <text evidence="2">Carbohydrate degradation; pentose phosphate pathway; D-glyceraldehyde 3-phosphate and beta-D-fructose 6-phosphate from D-ribose 5-phosphate and D-xylulose 5-phosphate (non-oxidative stage): step 2/3.</text>
</comment>
<comment type="subunit">
    <text evidence="1">Homodimer.</text>
</comment>
<comment type="subcellular location">
    <subcellularLocation>
        <location evidence="2">Cytoplasm</location>
    </subcellularLocation>
</comment>
<comment type="similarity">
    <text evidence="2">Belongs to the transaldolase family. Type 1 subfamily.</text>
</comment>
<dbReference type="EC" id="2.2.1.2" evidence="2"/>
<dbReference type="EMBL" id="CP000720">
    <property type="protein sequence ID" value="ABS47615.1"/>
    <property type="molecule type" value="Genomic_DNA"/>
</dbReference>
<dbReference type="RefSeq" id="WP_002209241.1">
    <property type="nucleotide sequence ID" value="NC_009708.1"/>
</dbReference>
<dbReference type="SMR" id="A7FME9"/>
<dbReference type="GeneID" id="57974146"/>
<dbReference type="KEGG" id="ypi:YpsIP31758_3472"/>
<dbReference type="HOGENOM" id="CLU_047470_0_1_6"/>
<dbReference type="UniPathway" id="UPA00115">
    <property type="reaction ID" value="UER00414"/>
</dbReference>
<dbReference type="Proteomes" id="UP000002412">
    <property type="component" value="Chromosome"/>
</dbReference>
<dbReference type="GO" id="GO:0005829">
    <property type="term" value="C:cytosol"/>
    <property type="evidence" value="ECO:0007669"/>
    <property type="project" value="TreeGrafter"/>
</dbReference>
<dbReference type="GO" id="GO:0004801">
    <property type="term" value="F:transaldolase activity"/>
    <property type="evidence" value="ECO:0000250"/>
    <property type="project" value="UniProtKB"/>
</dbReference>
<dbReference type="GO" id="GO:0005975">
    <property type="term" value="P:carbohydrate metabolic process"/>
    <property type="evidence" value="ECO:0007669"/>
    <property type="project" value="InterPro"/>
</dbReference>
<dbReference type="GO" id="GO:0006098">
    <property type="term" value="P:pentose-phosphate shunt"/>
    <property type="evidence" value="ECO:0007669"/>
    <property type="project" value="UniProtKB-UniRule"/>
</dbReference>
<dbReference type="CDD" id="cd00957">
    <property type="entry name" value="Transaldolase_TalAB"/>
    <property type="match status" value="1"/>
</dbReference>
<dbReference type="FunFam" id="3.20.20.70:FF:000002">
    <property type="entry name" value="Transaldolase"/>
    <property type="match status" value="1"/>
</dbReference>
<dbReference type="Gene3D" id="3.20.20.70">
    <property type="entry name" value="Aldolase class I"/>
    <property type="match status" value="1"/>
</dbReference>
<dbReference type="HAMAP" id="MF_00492">
    <property type="entry name" value="Transaldolase_1"/>
    <property type="match status" value="1"/>
</dbReference>
<dbReference type="InterPro" id="IPR013785">
    <property type="entry name" value="Aldolase_TIM"/>
</dbReference>
<dbReference type="InterPro" id="IPR001585">
    <property type="entry name" value="TAL/FSA"/>
</dbReference>
<dbReference type="InterPro" id="IPR004730">
    <property type="entry name" value="Transaldolase_1"/>
</dbReference>
<dbReference type="InterPro" id="IPR018225">
    <property type="entry name" value="Transaldolase_AS"/>
</dbReference>
<dbReference type="NCBIfam" id="NF009001">
    <property type="entry name" value="PRK12346.1"/>
    <property type="match status" value="1"/>
</dbReference>
<dbReference type="NCBIfam" id="TIGR00874">
    <property type="entry name" value="talAB"/>
    <property type="match status" value="1"/>
</dbReference>
<dbReference type="PANTHER" id="PTHR10683">
    <property type="entry name" value="TRANSALDOLASE"/>
    <property type="match status" value="1"/>
</dbReference>
<dbReference type="PANTHER" id="PTHR10683:SF18">
    <property type="entry name" value="TRANSALDOLASE"/>
    <property type="match status" value="1"/>
</dbReference>
<dbReference type="Pfam" id="PF00923">
    <property type="entry name" value="TAL_FSA"/>
    <property type="match status" value="1"/>
</dbReference>
<dbReference type="SUPFAM" id="SSF51569">
    <property type="entry name" value="Aldolase"/>
    <property type="match status" value="1"/>
</dbReference>
<dbReference type="PROSITE" id="PS01054">
    <property type="entry name" value="TRANSALDOLASE_1"/>
    <property type="match status" value="1"/>
</dbReference>
<dbReference type="PROSITE" id="PS00958">
    <property type="entry name" value="TRANSALDOLASE_2"/>
    <property type="match status" value="1"/>
</dbReference>
<evidence type="ECO:0000250" key="1"/>
<evidence type="ECO:0000255" key="2">
    <source>
        <dbReference type="HAMAP-Rule" id="MF_00492"/>
    </source>
</evidence>
<proteinExistence type="inferred from homology"/>
<organism>
    <name type="scientific">Yersinia pseudotuberculosis serotype O:1b (strain IP 31758)</name>
    <dbReference type="NCBI Taxonomy" id="349747"/>
    <lineage>
        <taxon>Bacteria</taxon>
        <taxon>Pseudomonadati</taxon>
        <taxon>Pseudomonadota</taxon>
        <taxon>Gammaproteobacteria</taxon>
        <taxon>Enterobacterales</taxon>
        <taxon>Yersiniaceae</taxon>
        <taxon>Yersinia</taxon>
    </lineage>
</organism>
<accession>A7FME9</accession>
<reference key="1">
    <citation type="journal article" date="2007" name="PLoS Genet.">
        <title>The complete genome sequence of Yersinia pseudotuberculosis IP31758, the causative agent of Far East scarlet-like fever.</title>
        <authorList>
            <person name="Eppinger M."/>
            <person name="Rosovitz M.J."/>
            <person name="Fricke W.F."/>
            <person name="Rasko D.A."/>
            <person name="Kokorina G."/>
            <person name="Fayolle C."/>
            <person name="Lindler L.E."/>
            <person name="Carniel E."/>
            <person name="Ravel J."/>
        </authorList>
    </citation>
    <scope>NUCLEOTIDE SEQUENCE [LARGE SCALE GENOMIC DNA]</scope>
    <source>
        <strain>IP 31758</strain>
    </source>
</reference>
<sequence length="317" mass="35049">MTDKLTSLRQITTVVADTGDIAAMKLYQPQDATTNPSIILNAAQIPEYRKLIDEAIAWAREQSSDHAQQIVDATDKLAVNIGLEILKLIPGRISTEVDARLSYDTVASVAKAKRLIKLYNEAGISNDRILIKLASTWQGIRAAEQLEKEGINCNLTLLFSFAQARACAEAGVFLISPFVGRILDWYKANGDQKEFAPSEDPGVVSVTEIYQYYKKHGYKTVVMGASFRNLGEIIELAGCDRLTIAPSLLKELAESEGPVERKLAYTGEIQAKPAPLTEAEFYWQHNQDPMAVDKLADGIRKFAIDQGKLEKMISDLL</sequence>
<gene>
    <name evidence="2" type="primary">tal</name>
    <name type="ordered locus">YpsIP31758_3472</name>
</gene>
<protein>
    <recommendedName>
        <fullName evidence="2">Transaldolase</fullName>
        <ecNumber evidence="2">2.2.1.2</ecNumber>
    </recommendedName>
</protein>
<name>TAL_YERP3</name>
<feature type="chain" id="PRO_1000060452" description="Transaldolase">
    <location>
        <begin position="1"/>
        <end position="317"/>
    </location>
</feature>
<feature type="active site" description="Schiff-base intermediate with substrate" evidence="2">
    <location>
        <position position="132"/>
    </location>
</feature>
<keyword id="KW-0963">Cytoplasm</keyword>
<keyword id="KW-0570">Pentose shunt</keyword>
<keyword id="KW-0704">Schiff base</keyword>
<keyword id="KW-0808">Transferase</keyword>